<reference key="1">
    <citation type="submission" date="2006-02" db="EMBL/GenBank/DDBJ databases">
        <title>Complete sequence of chromosome of Jannaschia sp. CCS1.</title>
        <authorList>
            <consortium name="US DOE Joint Genome Institute"/>
            <person name="Copeland A."/>
            <person name="Lucas S."/>
            <person name="Lapidus A."/>
            <person name="Barry K."/>
            <person name="Detter J.C."/>
            <person name="Glavina del Rio T."/>
            <person name="Hammon N."/>
            <person name="Israni S."/>
            <person name="Pitluck S."/>
            <person name="Brettin T."/>
            <person name="Bruce D."/>
            <person name="Han C."/>
            <person name="Tapia R."/>
            <person name="Gilna P."/>
            <person name="Chertkov O."/>
            <person name="Saunders E."/>
            <person name="Schmutz J."/>
            <person name="Larimer F."/>
            <person name="Land M."/>
            <person name="Kyrpides N."/>
            <person name="Lykidis A."/>
            <person name="Moran M.A."/>
            <person name="Belas R."/>
            <person name="Ye W."/>
            <person name="Buchan A."/>
            <person name="Gonzalez J.M."/>
            <person name="Schell M.A."/>
            <person name="Richardson P."/>
        </authorList>
    </citation>
    <scope>NUCLEOTIDE SEQUENCE [LARGE SCALE GENOMIC DNA]</scope>
    <source>
        <strain>CCS1</strain>
    </source>
</reference>
<proteinExistence type="inferred from homology"/>
<feature type="chain" id="PRO_0000344126" description="Urease accessory protein UreF">
    <location>
        <begin position="1"/>
        <end position="220"/>
    </location>
</feature>
<gene>
    <name evidence="1" type="primary">ureF</name>
    <name type="ordered locus">Jann_1755</name>
</gene>
<keyword id="KW-0143">Chaperone</keyword>
<keyword id="KW-0963">Cytoplasm</keyword>
<keyword id="KW-0996">Nickel insertion</keyword>
<keyword id="KW-1185">Reference proteome</keyword>
<name>UREF_JANSC</name>
<accession>Q28RJ0</accession>
<dbReference type="EMBL" id="CP000264">
    <property type="protein sequence ID" value="ABD54672.1"/>
    <property type="molecule type" value="Genomic_DNA"/>
</dbReference>
<dbReference type="RefSeq" id="WP_011454877.1">
    <property type="nucleotide sequence ID" value="NC_007802.1"/>
</dbReference>
<dbReference type="SMR" id="Q28RJ0"/>
<dbReference type="STRING" id="290400.Jann_1755"/>
<dbReference type="KEGG" id="jan:Jann_1755"/>
<dbReference type="eggNOG" id="COG0830">
    <property type="taxonomic scope" value="Bacteria"/>
</dbReference>
<dbReference type="HOGENOM" id="CLU_049215_2_0_5"/>
<dbReference type="OrthoDB" id="9798772at2"/>
<dbReference type="Proteomes" id="UP000008326">
    <property type="component" value="Chromosome"/>
</dbReference>
<dbReference type="GO" id="GO:0005737">
    <property type="term" value="C:cytoplasm"/>
    <property type="evidence" value="ECO:0007669"/>
    <property type="project" value="UniProtKB-SubCell"/>
</dbReference>
<dbReference type="GO" id="GO:0016151">
    <property type="term" value="F:nickel cation binding"/>
    <property type="evidence" value="ECO:0007669"/>
    <property type="project" value="UniProtKB-UniRule"/>
</dbReference>
<dbReference type="Gene3D" id="1.10.4190.10">
    <property type="entry name" value="Urease accessory protein UreF"/>
    <property type="match status" value="1"/>
</dbReference>
<dbReference type="HAMAP" id="MF_01385">
    <property type="entry name" value="UreF"/>
    <property type="match status" value="1"/>
</dbReference>
<dbReference type="InterPro" id="IPR002639">
    <property type="entry name" value="UreF"/>
</dbReference>
<dbReference type="InterPro" id="IPR038277">
    <property type="entry name" value="UreF_sf"/>
</dbReference>
<dbReference type="PANTHER" id="PTHR33620">
    <property type="entry name" value="UREASE ACCESSORY PROTEIN F"/>
    <property type="match status" value="1"/>
</dbReference>
<dbReference type="PANTHER" id="PTHR33620:SF1">
    <property type="entry name" value="UREASE ACCESSORY PROTEIN F"/>
    <property type="match status" value="1"/>
</dbReference>
<dbReference type="Pfam" id="PF01730">
    <property type="entry name" value="UreF"/>
    <property type="match status" value="1"/>
</dbReference>
<dbReference type="PIRSF" id="PIRSF009467">
    <property type="entry name" value="Ureas_acces_UreF"/>
    <property type="match status" value="1"/>
</dbReference>
<organism>
    <name type="scientific">Jannaschia sp. (strain CCS1)</name>
    <dbReference type="NCBI Taxonomy" id="290400"/>
    <lineage>
        <taxon>Bacteria</taxon>
        <taxon>Pseudomonadati</taxon>
        <taxon>Pseudomonadota</taxon>
        <taxon>Alphaproteobacteria</taxon>
        <taxon>Rhodobacterales</taxon>
        <taxon>Roseobacteraceae</taxon>
        <taxon>Jannaschia</taxon>
    </lineage>
</organism>
<evidence type="ECO:0000255" key="1">
    <source>
        <dbReference type="HAMAP-Rule" id="MF_01385"/>
    </source>
</evidence>
<sequence length="220" mass="22759">MSDGAFDAGRTGGLLRLSQWLSPAFPVSAYAYSHGLEAEICHGRVRDGADVAAWIEGVVRRGAGRTDAIVMLSAMQAGADLDRLHDLARALAGSRERWEETRDQGAALAATLAAMGEGDGVARAYPVALGAAAARLDLAADVVAALYLQSVVGNLVSAAVRFVPLGQAEGQRIVAGMQGAVADVAAEVVNCSIDDIAQAAFGADLAAMEHEGLEVRIFRT</sequence>
<comment type="function">
    <text evidence="1">Required for maturation of urease via the functional incorporation of the urease nickel metallocenter.</text>
</comment>
<comment type="subunit">
    <text evidence="1">UreD, UreF and UreG form a complex that acts as a GTP-hydrolysis-dependent molecular chaperone, activating the urease apoprotein by helping to assemble the nickel containing metallocenter of UreC. The UreE protein probably delivers the nickel.</text>
</comment>
<comment type="subcellular location">
    <subcellularLocation>
        <location evidence="1">Cytoplasm</location>
    </subcellularLocation>
</comment>
<comment type="similarity">
    <text evidence="1">Belongs to the UreF family.</text>
</comment>
<protein>
    <recommendedName>
        <fullName evidence="1">Urease accessory protein UreF</fullName>
    </recommendedName>
</protein>